<sequence>MNEDQFPKAYDPKSSETGVYSFWERSGIFVANASSEKPAYSIVMPPPNVTGILHMGHALVNTLQDTLIRYKRMQGFEVCWVPGTDHAGIATQTVVERHLKASLGKQRTDFSREEFLKHVWDWKEKSQNVILSQLRQLGCSCDWSRQRFTMDPGANRAVKKAFKILFDKGVIYRGYYLVNWDPILQTALADDEVEYEERDGWLYYIRYQVVNSEEFITVATTRPETLLGDTAIAVSPEDLRYSHLIGAKVVVPFVNREIPIIGDFSVDASFGTGAVKITPAHDKDDYKTGMNHQLPMINILTPTGEINENGGIFTGLSREVARENIITSLEALGLFVKKEAYSSRVGVSYRSGAIIEPYLSKQWFVSVDSFRDSLRGFVNSEEIRIFPPEFVRNYLTWVNNLKDWCISRQLWWGHRIPVWHNKHDENVICFDGEGGPEEVMRDPESWYQDPDVLDTWFSSGLWPLTCFGWPDENSLDLKKFYPTAVLVTGHDILFFWVTRMVLMCSAMVDTEPFSDVFLHGLIFGKSYREYDEKGEWFYVSGERKRDYDKGKALPKNVVAKWEKLSKSKGNVIDPIEMIEAYGADAVRLTLCSCANRGEQIDLDYHLFEEYKNFINKLWNGARFIFGHISELTSRDLEEGVNQDLLGLEDFYILDRFNELLDLIDGHYNCYSFDKIASLAYDFFKNDLCSTYLEIIKPTLFGKQDSDQQRATKRKLLATLLINILGVLHPIVPYITETLFQKLKATLGTVENGKGDSVTGHAVSMLRSEACMVAEYPKPIHVAFPQGLRESFGIAERLVYTIRNIRGEMQLDPREPLQAFVISSEKKELVDVCIPIMCALGGVKTVEQLAEAPKDSIFSLGVVEGIQVGVILPPEHLAKERVRLEKEKTRLEKSIDSVSKLLASEDFRTRANPSLVQAKKDSLRNSQRELQSILDKLASL</sequence>
<reference key="1">
    <citation type="journal article" date="2005" name="Infect. Immun.">
        <title>Comparative genomic analysis of Chlamydia trachomatis oculotropic and genitotropic strains.</title>
        <authorList>
            <person name="Carlson J.H."/>
            <person name="Porcella S.F."/>
            <person name="McClarty G."/>
            <person name="Caldwell H.D."/>
        </authorList>
    </citation>
    <scope>NUCLEOTIDE SEQUENCE [LARGE SCALE GENOMIC DNA]</scope>
    <source>
        <strain>ATCC VR-571B / DSM 19440 / HAR-13</strain>
    </source>
</reference>
<keyword id="KW-0030">Aminoacyl-tRNA synthetase</keyword>
<keyword id="KW-0067">ATP-binding</keyword>
<keyword id="KW-0175">Coiled coil</keyword>
<keyword id="KW-0963">Cytoplasm</keyword>
<keyword id="KW-0436">Ligase</keyword>
<keyword id="KW-0547">Nucleotide-binding</keyword>
<keyword id="KW-0648">Protein biosynthesis</keyword>
<dbReference type="EC" id="6.1.1.9" evidence="1"/>
<dbReference type="EMBL" id="CP000051">
    <property type="protein sequence ID" value="AAX50562.1"/>
    <property type="molecule type" value="Genomic_DNA"/>
</dbReference>
<dbReference type="RefSeq" id="WP_011324675.1">
    <property type="nucleotide sequence ID" value="NC_007429.1"/>
</dbReference>
<dbReference type="SMR" id="Q3KM60"/>
<dbReference type="KEGG" id="cta:CTA_0324"/>
<dbReference type="HOGENOM" id="CLU_001493_0_2_0"/>
<dbReference type="Proteomes" id="UP000002532">
    <property type="component" value="Chromosome"/>
</dbReference>
<dbReference type="GO" id="GO:0005829">
    <property type="term" value="C:cytosol"/>
    <property type="evidence" value="ECO:0007669"/>
    <property type="project" value="TreeGrafter"/>
</dbReference>
<dbReference type="GO" id="GO:0002161">
    <property type="term" value="F:aminoacyl-tRNA deacylase activity"/>
    <property type="evidence" value="ECO:0007669"/>
    <property type="project" value="InterPro"/>
</dbReference>
<dbReference type="GO" id="GO:0005524">
    <property type="term" value="F:ATP binding"/>
    <property type="evidence" value="ECO:0007669"/>
    <property type="project" value="UniProtKB-UniRule"/>
</dbReference>
<dbReference type="GO" id="GO:0004832">
    <property type="term" value="F:valine-tRNA ligase activity"/>
    <property type="evidence" value="ECO:0007669"/>
    <property type="project" value="UniProtKB-UniRule"/>
</dbReference>
<dbReference type="GO" id="GO:0006438">
    <property type="term" value="P:valyl-tRNA aminoacylation"/>
    <property type="evidence" value="ECO:0007669"/>
    <property type="project" value="UniProtKB-UniRule"/>
</dbReference>
<dbReference type="CDD" id="cd07962">
    <property type="entry name" value="Anticodon_Ia_Val"/>
    <property type="match status" value="1"/>
</dbReference>
<dbReference type="CDD" id="cd00817">
    <property type="entry name" value="ValRS_core"/>
    <property type="match status" value="1"/>
</dbReference>
<dbReference type="FunFam" id="3.40.50.620:FF:000032">
    <property type="entry name" value="Valine--tRNA ligase"/>
    <property type="match status" value="1"/>
</dbReference>
<dbReference type="FunFam" id="3.40.50.620:FF:000306">
    <property type="entry name" value="Valine--tRNA ligase"/>
    <property type="match status" value="1"/>
</dbReference>
<dbReference type="FunFam" id="3.90.740.10:FF:000010">
    <property type="entry name" value="Valine--tRNA ligase"/>
    <property type="match status" value="1"/>
</dbReference>
<dbReference type="Gene3D" id="3.40.50.620">
    <property type="entry name" value="HUPs"/>
    <property type="match status" value="2"/>
</dbReference>
<dbReference type="Gene3D" id="1.10.730.10">
    <property type="entry name" value="Isoleucyl-tRNA Synthetase, Domain 1"/>
    <property type="match status" value="1"/>
</dbReference>
<dbReference type="Gene3D" id="1.10.287.380">
    <property type="entry name" value="Valyl-tRNA synthetase, C-terminal domain"/>
    <property type="match status" value="1"/>
</dbReference>
<dbReference type="Gene3D" id="3.90.740.10">
    <property type="entry name" value="Valyl/Leucyl/Isoleucyl-tRNA synthetase, editing domain"/>
    <property type="match status" value="1"/>
</dbReference>
<dbReference type="HAMAP" id="MF_02004">
    <property type="entry name" value="Val_tRNA_synth_type1"/>
    <property type="match status" value="1"/>
</dbReference>
<dbReference type="InterPro" id="IPR001412">
    <property type="entry name" value="aa-tRNA-synth_I_CS"/>
</dbReference>
<dbReference type="InterPro" id="IPR002300">
    <property type="entry name" value="aa-tRNA-synth_Ia"/>
</dbReference>
<dbReference type="InterPro" id="IPR033705">
    <property type="entry name" value="Anticodon_Ia_Val"/>
</dbReference>
<dbReference type="InterPro" id="IPR013155">
    <property type="entry name" value="M/V/L/I-tRNA-synth_anticd-bd"/>
</dbReference>
<dbReference type="InterPro" id="IPR014729">
    <property type="entry name" value="Rossmann-like_a/b/a_fold"/>
</dbReference>
<dbReference type="InterPro" id="IPR010978">
    <property type="entry name" value="tRNA-bd_arm"/>
</dbReference>
<dbReference type="InterPro" id="IPR009080">
    <property type="entry name" value="tRNAsynth_Ia_anticodon-bd"/>
</dbReference>
<dbReference type="InterPro" id="IPR037118">
    <property type="entry name" value="Val-tRNA_synth_C_sf"/>
</dbReference>
<dbReference type="InterPro" id="IPR019499">
    <property type="entry name" value="Val-tRNA_synth_tRNA-bd"/>
</dbReference>
<dbReference type="InterPro" id="IPR009008">
    <property type="entry name" value="Val/Leu/Ile-tRNA-synth_edit"/>
</dbReference>
<dbReference type="InterPro" id="IPR002303">
    <property type="entry name" value="Valyl-tRNA_ligase"/>
</dbReference>
<dbReference type="NCBIfam" id="NF004349">
    <property type="entry name" value="PRK05729.1"/>
    <property type="match status" value="1"/>
</dbReference>
<dbReference type="NCBIfam" id="TIGR00422">
    <property type="entry name" value="valS"/>
    <property type="match status" value="1"/>
</dbReference>
<dbReference type="PANTHER" id="PTHR11946:SF93">
    <property type="entry name" value="VALINE--TRNA LIGASE, CHLOROPLASTIC_MITOCHONDRIAL 2"/>
    <property type="match status" value="1"/>
</dbReference>
<dbReference type="PANTHER" id="PTHR11946">
    <property type="entry name" value="VALYL-TRNA SYNTHETASES"/>
    <property type="match status" value="1"/>
</dbReference>
<dbReference type="Pfam" id="PF08264">
    <property type="entry name" value="Anticodon_1"/>
    <property type="match status" value="1"/>
</dbReference>
<dbReference type="Pfam" id="PF00133">
    <property type="entry name" value="tRNA-synt_1"/>
    <property type="match status" value="2"/>
</dbReference>
<dbReference type="Pfam" id="PF10458">
    <property type="entry name" value="Val_tRNA-synt_C"/>
    <property type="match status" value="1"/>
</dbReference>
<dbReference type="PRINTS" id="PR00986">
    <property type="entry name" value="TRNASYNTHVAL"/>
</dbReference>
<dbReference type="SUPFAM" id="SSF47323">
    <property type="entry name" value="Anticodon-binding domain of a subclass of class I aminoacyl-tRNA synthetases"/>
    <property type="match status" value="1"/>
</dbReference>
<dbReference type="SUPFAM" id="SSF52374">
    <property type="entry name" value="Nucleotidylyl transferase"/>
    <property type="match status" value="1"/>
</dbReference>
<dbReference type="SUPFAM" id="SSF46589">
    <property type="entry name" value="tRNA-binding arm"/>
    <property type="match status" value="1"/>
</dbReference>
<dbReference type="SUPFAM" id="SSF50677">
    <property type="entry name" value="ValRS/IleRS/LeuRS editing domain"/>
    <property type="match status" value="1"/>
</dbReference>
<dbReference type="PROSITE" id="PS00178">
    <property type="entry name" value="AA_TRNA_LIGASE_I"/>
    <property type="match status" value="1"/>
</dbReference>
<feature type="chain" id="PRO_1000216263" description="Valine--tRNA ligase">
    <location>
        <begin position="1"/>
        <end position="939"/>
    </location>
</feature>
<feature type="coiled-coil region" evidence="1">
    <location>
        <begin position="874"/>
        <end position="939"/>
    </location>
</feature>
<feature type="short sequence motif" description="'HIGH' region">
    <location>
        <begin position="47"/>
        <end position="57"/>
    </location>
</feature>
<feature type="short sequence motif" description="'KMSKS' region">
    <location>
        <begin position="563"/>
        <end position="567"/>
    </location>
</feature>
<feature type="binding site" evidence="1">
    <location>
        <position position="566"/>
    </location>
    <ligand>
        <name>ATP</name>
        <dbReference type="ChEBI" id="CHEBI:30616"/>
    </ligand>
</feature>
<proteinExistence type="inferred from homology"/>
<name>SYV_CHLTA</name>
<gene>
    <name evidence="1" type="primary">valS</name>
    <name type="ordered locus">CTA_0324</name>
</gene>
<accession>Q3KM60</accession>
<organism>
    <name type="scientific">Chlamydia trachomatis serovar A (strain ATCC VR-571B / DSM 19440 / HAR-13)</name>
    <dbReference type="NCBI Taxonomy" id="315277"/>
    <lineage>
        <taxon>Bacteria</taxon>
        <taxon>Pseudomonadati</taxon>
        <taxon>Chlamydiota</taxon>
        <taxon>Chlamydiia</taxon>
        <taxon>Chlamydiales</taxon>
        <taxon>Chlamydiaceae</taxon>
        <taxon>Chlamydia/Chlamydophila group</taxon>
        <taxon>Chlamydia</taxon>
    </lineage>
</organism>
<comment type="function">
    <text evidence="1">Catalyzes the attachment of valine to tRNA(Val). As ValRS can inadvertently accommodate and process structurally similar amino acids such as threonine, to avoid such errors, it has a 'posttransfer' editing activity that hydrolyzes mischarged Thr-tRNA(Val) in a tRNA-dependent manner.</text>
</comment>
<comment type="catalytic activity">
    <reaction evidence="1">
        <text>tRNA(Val) + L-valine + ATP = L-valyl-tRNA(Val) + AMP + diphosphate</text>
        <dbReference type="Rhea" id="RHEA:10704"/>
        <dbReference type="Rhea" id="RHEA-COMP:9672"/>
        <dbReference type="Rhea" id="RHEA-COMP:9708"/>
        <dbReference type="ChEBI" id="CHEBI:30616"/>
        <dbReference type="ChEBI" id="CHEBI:33019"/>
        <dbReference type="ChEBI" id="CHEBI:57762"/>
        <dbReference type="ChEBI" id="CHEBI:78442"/>
        <dbReference type="ChEBI" id="CHEBI:78537"/>
        <dbReference type="ChEBI" id="CHEBI:456215"/>
        <dbReference type="EC" id="6.1.1.9"/>
    </reaction>
</comment>
<comment type="subunit">
    <text evidence="1">Monomer.</text>
</comment>
<comment type="subcellular location">
    <subcellularLocation>
        <location evidence="1">Cytoplasm</location>
    </subcellularLocation>
</comment>
<comment type="domain">
    <text evidence="1">ValRS has two distinct active sites: one for aminoacylation and one for editing. The misactivated threonine is translocated from the active site to the editing site.</text>
</comment>
<comment type="domain">
    <text evidence="1">The C-terminal coiled-coil domain is crucial for aminoacylation activity.</text>
</comment>
<comment type="similarity">
    <text evidence="1">Belongs to the class-I aminoacyl-tRNA synthetase family. ValS type 1 subfamily.</text>
</comment>
<protein>
    <recommendedName>
        <fullName evidence="1">Valine--tRNA ligase</fullName>
        <ecNumber evidence="1">6.1.1.9</ecNumber>
    </recommendedName>
    <alternativeName>
        <fullName evidence="1">Valyl-tRNA synthetase</fullName>
        <shortName evidence="1">ValRS</shortName>
    </alternativeName>
</protein>
<evidence type="ECO:0000255" key="1">
    <source>
        <dbReference type="HAMAP-Rule" id="MF_02004"/>
    </source>
</evidence>